<gene>
    <name evidence="1" type="primary">rplV</name>
    <name type="ordered locus">Mnod_1913</name>
</gene>
<reference key="1">
    <citation type="submission" date="2009-01" db="EMBL/GenBank/DDBJ databases">
        <title>Complete sequence of chromosome of Methylobacterium nodulans ORS 2060.</title>
        <authorList>
            <consortium name="US DOE Joint Genome Institute"/>
            <person name="Lucas S."/>
            <person name="Copeland A."/>
            <person name="Lapidus A."/>
            <person name="Glavina del Rio T."/>
            <person name="Dalin E."/>
            <person name="Tice H."/>
            <person name="Bruce D."/>
            <person name="Goodwin L."/>
            <person name="Pitluck S."/>
            <person name="Sims D."/>
            <person name="Brettin T."/>
            <person name="Detter J.C."/>
            <person name="Han C."/>
            <person name="Larimer F."/>
            <person name="Land M."/>
            <person name="Hauser L."/>
            <person name="Kyrpides N."/>
            <person name="Ivanova N."/>
            <person name="Marx C.J."/>
            <person name="Richardson P."/>
        </authorList>
    </citation>
    <scope>NUCLEOTIDE SEQUENCE [LARGE SCALE GENOMIC DNA]</scope>
    <source>
        <strain>LMG 21967 / CNCM I-2342 / ORS 2060</strain>
    </source>
</reference>
<comment type="function">
    <text evidence="1">This protein binds specifically to 23S rRNA; its binding is stimulated by other ribosomal proteins, e.g. L4, L17, and L20. It is important during the early stages of 50S assembly. It makes multiple contacts with different domains of the 23S rRNA in the assembled 50S subunit and ribosome (By similarity).</text>
</comment>
<comment type="function">
    <text evidence="1">The globular domain of the protein is located near the polypeptide exit tunnel on the outside of the subunit, while an extended beta-hairpin is found that lines the wall of the exit tunnel in the center of the 70S ribosome.</text>
</comment>
<comment type="subunit">
    <text evidence="1">Part of the 50S ribosomal subunit.</text>
</comment>
<comment type="similarity">
    <text evidence="1">Belongs to the universal ribosomal protein uL22 family.</text>
</comment>
<dbReference type="EMBL" id="CP001349">
    <property type="protein sequence ID" value="ACL56902.1"/>
    <property type="molecule type" value="Genomic_DNA"/>
</dbReference>
<dbReference type="RefSeq" id="WP_015928591.1">
    <property type="nucleotide sequence ID" value="NC_011894.1"/>
</dbReference>
<dbReference type="SMR" id="B8IS90"/>
<dbReference type="STRING" id="460265.Mnod_1913"/>
<dbReference type="KEGG" id="mno:Mnod_1913"/>
<dbReference type="eggNOG" id="COG0091">
    <property type="taxonomic scope" value="Bacteria"/>
</dbReference>
<dbReference type="HOGENOM" id="CLU_083987_3_0_5"/>
<dbReference type="OrthoDB" id="9805969at2"/>
<dbReference type="Proteomes" id="UP000008207">
    <property type="component" value="Chromosome"/>
</dbReference>
<dbReference type="GO" id="GO:0022625">
    <property type="term" value="C:cytosolic large ribosomal subunit"/>
    <property type="evidence" value="ECO:0007669"/>
    <property type="project" value="TreeGrafter"/>
</dbReference>
<dbReference type="GO" id="GO:0019843">
    <property type="term" value="F:rRNA binding"/>
    <property type="evidence" value="ECO:0007669"/>
    <property type="project" value="UniProtKB-UniRule"/>
</dbReference>
<dbReference type="GO" id="GO:0003735">
    <property type="term" value="F:structural constituent of ribosome"/>
    <property type="evidence" value="ECO:0007669"/>
    <property type="project" value="InterPro"/>
</dbReference>
<dbReference type="GO" id="GO:0006412">
    <property type="term" value="P:translation"/>
    <property type="evidence" value="ECO:0007669"/>
    <property type="project" value="UniProtKB-UniRule"/>
</dbReference>
<dbReference type="CDD" id="cd00336">
    <property type="entry name" value="Ribosomal_L22"/>
    <property type="match status" value="1"/>
</dbReference>
<dbReference type="Gene3D" id="3.90.470.10">
    <property type="entry name" value="Ribosomal protein L22/L17"/>
    <property type="match status" value="1"/>
</dbReference>
<dbReference type="HAMAP" id="MF_01331_B">
    <property type="entry name" value="Ribosomal_uL22_B"/>
    <property type="match status" value="1"/>
</dbReference>
<dbReference type="InterPro" id="IPR001063">
    <property type="entry name" value="Ribosomal_uL22"/>
</dbReference>
<dbReference type="InterPro" id="IPR005727">
    <property type="entry name" value="Ribosomal_uL22_bac/chlpt-type"/>
</dbReference>
<dbReference type="InterPro" id="IPR047867">
    <property type="entry name" value="Ribosomal_uL22_bac/org-type"/>
</dbReference>
<dbReference type="InterPro" id="IPR018260">
    <property type="entry name" value="Ribosomal_uL22_CS"/>
</dbReference>
<dbReference type="InterPro" id="IPR036394">
    <property type="entry name" value="Ribosomal_uL22_sf"/>
</dbReference>
<dbReference type="NCBIfam" id="TIGR01044">
    <property type="entry name" value="rplV_bact"/>
    <property type="match status" value="1"/>
</dbReference>
<dbReference type="PANTHER" id="PTHR13501">
    <property type="entry name" value="CHLOROPLAST 50S RIBOSOMAL PROTEIN L22-RELATED"/>
    <property type="match status" value="1"/>
</dbReference>
<dbReference type="PANTHER" id="PTHR13501:SF8">
    <property type="entry name" value="LARGE RIBOSOMAL SUBUNIT PROTEIN UL22M"/>
    <property type="match status" value="1"/>
</dbReference>
<dbReference type="Pfam" id="PF00237">
    <property type="entry name" value="Ribosomal_L22"/>
    <property type="match status" value="1"/>
</dbReference>
<dbReference type="SUPFAM" id="SSF54843">
    <property type="entry name" value="Ribosomal protein L22"/>
    <property type="match status" value="1"/>
</dbReference>
<dbReference type="PROSITE" id="PS00464">
    <property type="entry name" value="RIBOSOMAL_L22"/>
    <property type="match status" value="1"/>
</dbReference>
<feature type="chain" id="PRO_1000166072" description="Large ribosomal subunit protein uL22">
    <location>
        <begin position="1"/>
        <end position="127"/>
    </location>
</feature>
<organism>
    <name type="scientific">Methylobacterium nodulans (strain LMG 21967 / CNCM I-2342 / ORS 2060)</name>
    <dbReference type="NCBI Taxonomy" id="460265"/>
    <lineage>
        <taxon>Bacteria</taxon>
        <taxon>Pseudomonadati</taxon>
        <taxon>Pseudomonadota</taxon>
        <taxon>Alphaproteobacteria</taxon>
        <taxon>Hyphomicrobiales</taxon>
        <taxon>Methylobacteriaceae</taxon>
        <taxon>Methylobacterium</taxon>
    </lineage>
</organism>
<sequence length="127" mass="13877">MGKAAAPRALPENEAKAVARMLRVSPQKLNLVAQLIRGKKVATALADLQFSQKRIAVEVKKCLESAIANAENNHDLDVDDLVVKEAYVGKALVLKRFHARARGRGARILKPFSNLTIVVREVRAEAA</sequence>
<keyword id="KW-1185">Reference proteome</keyword>
<keyword id="KW-0687">Ribonucleoprotein</keyword>
<keyword id="KW-0689">Ribosomal protein</keyword>
<keyword id="KW-0694">RNA-binding</keyword>
<keyword id="KW-0699">rRNA-binding</keyword>
<evidence type="ECO:0000255" key="1">
    <source>
        <dbReference type="HAMAP-Rule" id="MF_01331"/>
    </source>
</evidence>
<evidence type="ECO:0000305" key="2"/>
<proteinExistence type="inferred from homology"/>
<protein>
    <recommendedName>
        <fullName evidence="1">Large ribosomal subunit protein uL22</fullName>
    </recommendedName>
    <alternativeName>
        <fullName evidence="2">50S ribosomal protein L22</fullName>
    </alternativeName>
</protein>
<name>RL22_METNO</name>
<accession>B8IS90</accession>